<accession>P84572</accession>
<accession>Q0VZ42</accession>
<organism>
    <name type="scientific">Pithecopus hypochondrialis</name>
    <name type="common">Orange-legged leaf frog</name>
    <name type="synonym">Phyllomedusa hypochondrialis</name>
    <dbReference type="NCBI Taxonomy" id="317381"/>
    <lineage>
        <taxon>Eukaryota</taxon>
        <taxon>Metazoa</taxon>
        <taxon>Chordata</taxon>
        <taxon>Craniata</taxon>
        <taxon>Vertebrata</taxon>
        <taxon>Euteleostomi</taxon>
        <taxon>Amphibia</taxon>
        <taxon>Batrachia</taxon>
        <taxon>Anura</taxon>
        <taxon>Neobatrachia</taxon>
        <taxon>Hyloidea</taxon>
        <taxon>Hylidae</taxon>
        <taxon>Phyllomedusinae</taxon>
        <taxon>Pithecopus</taxon>
    </lineage>
</organism>
<dbReference type="EMBL" id="AM229010">
    <property type="protein sequence ID" value="CAJ76134.1"/>
    <property type="molecule type" value="mRNA"/>
</dbReference>
<dbReference type="TCDB" id="1.C.52.1.12">
    <property type="family name" value="the dermaseptin (dermaseptin) family"/>
</dbReference>
<dbReference type="GO" id="GO:0005576">
    <property type="term" value="C:extracellular region"/>
    <property type="evidence" value="ECO:0007669"/>
    <property type="project" value="UniProtKB-SubCell"/>
</dbReference>
<dbReference type="GO" id="GO:0042742">
    <property type="term" value="P:defense response to bacterium"/>
    <property type="evidence" value="ECO:0007669"/>
    <property type="project" value="UniProtKB-KW"/>
</dbReference>
<dbReference type="InterPro" id="IPR004275">
    <property type="entry name" value="Frog_antimicrobial_propeptide"/>
</dbReference>
<dbReference type="InterPro" id="IPR016322">
    <property type="entry name" value="FSAP"/>
</dbReference>
<dbReference type="Pfam" id="PF03032">
    <property type="entry name" value="FSAP_sig_propep"/>
    <property type="match status" value="1"/>
</dbReference>
<dbReference type="PIRSF" id="PIRSF001822">
    <property type="entry name" value="Dermaseptin_precursor"/>
    <property type="match status" value="1"/>
</dbReference>
<gene>
    <name type="primary">psn7</name>
    <name type="synonym">psn-7</name>
</gene>
<proteinExistence type="evidence at protein level"/>
<comment type="function">
    <text evidence="4">Has antibacterial activity against the Gram-negative bacteria E.coli and P.aeruginosa, and the Gram-positive bacterium S.aureus. No hemolytic activity.</text>
</comment>
<comment type="subcellular location">
    <subcellularLocation>
        <location evidence="3 4 5">Secreted</location>
    </subcellularLocation>
</comment>
<comment type="tissue specificity">
    <text evidence="3 4 5">Expressed by the skin glands.</text>
</comment>
<comment type="mass spectrometry" mass="2047.25" error="0.01" method="MALDI" evidence="3 5"/>
<comment type="mass spectrometry" mass="2049.46" method="MALDI" evidence="3 5"/>
<comment type="similarity">
    <text evidence="1">Belongs to the frog skin active peptide (FSAP) family. Phylloseptin subfamily.</text>
</comment>
<comment type="online information" name="The antimicrobial peptide database">
    <link uri="https://wangapd3.com/database/query_output.php?ID=00762"/>
</comment>
<reference evidence="10 11" key="1">
    <citation type="journal article" date="2006" name="Peptides">
        <title>Elements of the granular gland peptidome and transcriptome persist in air-dried skin of the South American orange-legged leaf frog, Phyllomedusa hypocondrialis.</title>
        <authorList>
            <person name="Chen T."/>
            <person name="Zhou M."/>
            <person name="Gagliardo R."/>
            <person name="Walker B."/>
            <person name="Shaw C."/>
        </authorList>
    </citation>
    <scope>NUCLEOTIDE SEQUENCE [MRNA]</scope>
    <scope>PROTEIN SEQUENCE OF 47-65</scope>
    <scope>SUBCELLULAR LOCATION</scope>
    <scope>TISSUE SPECIFICITY</scope>
    <scope>MASS SPECTROMETRY</scope>
    <scope>AMIDATION AT PHE-65</scope>
    <source>
        <tissue evidence="11">Skin</tissue>
        <tissue evidence="3">Skin secretion</tissue>
    </source>
</reference>
<reference evidence="10" key="2">
    <citation type="journal article" date="2006" name="Peptides">
        <title>Isolation and biochemical characterization of peptides presenting antimicrobial activity from the skin of Phyllomedusa hypochondrialis.</title>
        <authorList>
            <person name="Conceicao K."/>
            <person name="Konno K."/>
            <person name="Richardson M."/>
            <person name="Antoniazzi M.M."/>
            <person name="Jared C."/>
            <person name="Daffre S."/>
            <person name="de Camargo A.C.M."/>
            <person name="Pimenta D.C."/>
        </authorList>
    </citation>
    <scope>PROTEIN SEQUENCE OF 47-65</scope>
    <scope>FUNCTION</scope>
    <scope>SUBCELLULAR LOCATION</scope>
    <scope>TISSUE SPECIFICITY</scope>
    <scope>AMIDATION AT PHE-65</scope>
    <source>
        <tissue evidence="4">Skin secretion</tissue>
    </source>
</reference>
<reference evidence="10" key="3">
    <citation type="submission" date="2006-08" db="UniProtKB">
        <title>High-throughput imaging co-localization of peptides and proteins.</title>
        <authorList>
            <person name="Silva L.P."/>
            <person name="Brand G.D."/>
            <person name="Bloch C. Jr."/>
        </authorList>
    </citation>
    <scope>PROTEIN SEQUENCE OF 47-65</scope>
    <scope>SUBCELLULAR LOCATION</scope>
    <scope>TISSUE SPECIFICITY</scope>
    <scope>MASS SPECTROMETRY</scope>
    <scope>AMIDATION AT PHE-65</scope>
    <source>
        <tissue evidence="5">Skin secretion</tissue>
    </source>
</reference>
<reference key="4">
    <citation type="journal article" date="2008" name="Peptides">
        <title>A consistent nomenclature of antimicrobial peptides isolated from frogs of the subfamily Phyllomedusinae.</title>
        <authorList>
            <person name="Amiche M."/>
            <person name="Ladram A."/>
            <person name="Nicolas P."/>
        </authorList>
    </citation>
    <scope>NOMENCLATURE</scope>
</reference>
<sequence length="66" mass="7554">MAFLKKSLFLVLFLGLVSLSICEEEKRETEEEENEQEDDDKSEEKRFLSLIPHAINAVSAIAKHFG</sequence>
<keyword id="KW-0027">Amidation</keyword>
<keyword id="KW-0878">Amphibian defense peptide</keyword>
<keyword id="KW-0044">Antibiotic</keyword>
<keyword id="KW-0929">Antimicrobial</keyword>
<keyword id="KW-0165">Cleavage on pair of basic residues</keyword>
<keyword id="KW-0903">Direct protein sequencing</keyword>
<keyword id="KW-0964">Secreted</keyword>
<keyword id="KW-0732">Signal</keyword>
<name>PLS5_PITHY</name>
<evidence type="ECO:0000255" key="1"/>
<evidence type="ECO:0000256" key="2">
    <source>
        <dbReference type="SAM" id="MobiDB-lite"/>
    </source>
</evidence>
<evidence type="ECO:0000269" key="3">
    <source>
    </source>
</evidence>
<evidence type="ECO:0000269" key="4">
    <source>
    </source>
</evidence>
<evidence type="ECO:0000269" key="5">
    <source ref="3"/>
</evidence>
<evidence type="ECO:0000303" key="6">
    <source>
    </source>
</evidence>
<evidence type="ECO:0000303" key="7">
    <source>
    </source>
</evidence>
<evidence type="ECO:0000303" key="8">
    <source>
    </source>
</evidence>
<evidence type="ECO:0000303" key="9">
    <source ref="3"/>
</evidence>
<evidence type="ECO:0000305" key="10"/>
<evidence type="ECO:0000312" key="11">
    <source>
        <dbReference type="EMBL" id="CAJ76134.1"/>
    </source>
</evidence>
<protein>
    <recommendedName>
        <fullName evidence="8">Phylloseptin-H5</fullName>
        <shortName evidence="8">PLS-H5</shortName>
    </recommendedName>
    <alternativeName>
        <fullName evidence="6 7 9">Phylloseptin-7</fullName>
        <shortName evidence="6 7 9">PS-7</shortName>
    </alternativeName>
</protein>
<feature type="signal peptide" evidence="1">
    <location>
        <begin position="1"/>
        <end position="22"/>
    </location>
</feature>
<feature type="propeptide" id="PRO_0000291607" evidence="3 4 5">
    <location>
        <begin position="23"/>
        <end position="44"/>
    </location>
</feature>
<feature type="peptide" id="PRO_0000250600" description="Phylloseptin-H5" evidence="3 4 5">
    <location>
        <begin position="47"/>
        <end position="65"/>
    </location>
</feature>
<feature type="region of interest" description="Disordered" evidence="2">
    <location>
        <begin position="24"/>
        <end position="44"/>
    </location>
</feature>
<feature type="compositionally biased region" description="Acidic residues" evidence="2">
    <location>
        <begin position="30"/>
        <end position="41"/>
    </location>
</feature>
<feature type="modified residue" description="Phenylalanine amide" evidence="3 4 5">
    <location>
        <position position="65"/>
    </location>
</feature>